<evidence type="ECO:0000250" key="1"/>
<evidence type="ECO:0000255" key="2"/>
<evidence type="ECO:0000255" key="3">
    <source>
        <dbReference type="PROSITE-ProRule" id="PRU00114"/>
    </source>
</evidence>
<evidence type="ECO:0000255" key="4">
    <source>
        <dbReference type="PROSITE-ProRule" id="PRU00159"/>
    </source>
</evidence>
<evidence type="ECO:0000255" key="5">
    <source>
        <dbReference type="PROSITE-ProRule" id="PRU10028"/>
    </source>
</evidence>
<evidence type="ECO:0000256" key="6">
    <source>
        <dbReference type="SAM" id="MobiDB-lite"/>
    </source>
</evidence>
<evidence type="ECO:0000269" key="7">
    <source>
    </source>
</evidence>
<organism>
    <name type="scientific">Pleurodeles waltl</name>
    <name type="common">Iberian ribbed newt</name>
    <dbReference type="NCBI Taxonomy" id="8319"/>
    <lineage>
        <taxon>Eukaryota</taxon>
        <taxon>Metazoa</taxon>
        <taxon>Chordata</taxon>
        <taxon>Craniata</taxon>
        <taxon>Vertebrata</taxon>
        <taxon>Euteleostomi</taxon>
        <taxon>Amphibia</taxon>
        <taxon>Batrachia</taxon>
        <taxon>Caudata</taxon>
        <taxon>Salamandroidea</taxon>
        <taxon>Salamandridae</taxon>
        <taxon>Pleurodelinae</taxon>
        <taxon>Pleurodeles</taxon>
    </lineage>
</organism>
<keyword id="KW-0067">ATP-binding</keyword>
<keyword id="KW-1003">Cell membrane</keyword>
<keyword id="KW-1015">Disulfide bond</keyword>
<keyword id="KW-0256">Endoplasmic reticulum</keyword>
<keyword id="KW-0967">Endosome</keyword>
<keyword id="KW-0325">Glycoprotein</keyword>
<keyword id="KW-0393">Immunoglobulin domain</keyword>
<keyword id="KW-0418">Kinase</keyword>
<keyword id="KW-0472">Membrane</keyword>
<keyword id="KW-0547">Nucleotide-binding</keyword>
<keyword id="KW-0597">Phosphoprotein</keyword>
<keyword id="KW-0675">Receptor</keyword>
<keyword id="KW-0677">Repeat</keyword>
<keyword id="KW-0732">Signal</keyword>
<keyword id="KW-0808">Transferase</keyword>
<keyword id="KW-0812">Transmembrane</keyword>
<keyword id="KW-1133">Transmembrane helix</keyword>
<keyword id="KW-0829">Tyrosine-protein kinase</keyword>
<keyword id="KW-0832">Ubl conjugation</keyword>
<protein>
    <recommendedName>
        <fullName>Fibroblast growth factor receptor 4</fullName>
        <shortName>FGFR-4</shortName>
        <ecNumber>2.7.10.1</ecNumber>
    </recommendedName>
    <alternativeName>
        <fullName>PFR4</fullName>
    </alternativeName>
</protein>
<gene>
    <name type="primary">FGFR4</name>
</gene>
<sequence length="822" mass="92069">MGVQKDSRDIRWNRTTRPLALLLCGLLAFSALSCARTLPEGRKANLAELVSEEEEHFLLDPGNALRLFCDTNQTTIVNWYTESTRLQHGGRIRLTDTVLEIADVTYEDSGLYLCVVPGTGHILRNFTISVVDSLASGDDDDEDHGREDSAGDMGEDPPYSTSYRAPFWSQPQRMDKKLYAVPAGNTVKFRCPSAGNPTPGIRWLKNGREFGGEHRIGGIRLRHQHWSLVMESVVPSDRGNYTCLVENKFGSISYSYLLDVLERSPHRPILQAGLPANTTAMLGSDVQFFCKVYSDAQPHIQWLKHIEVNGSRYGPDGVPFVQVLKTADINSSEVEVLYLHNVSFEDAGEYTCLAGNSIGLSYQSAWLTVLPEEDFAKEAEGPETRYTDIIIYTSGSLALLMAAVIVVLCRMQLPPTKTHLEPATVHKLSRFPLMRQFSLESSSSGKSSTSLVRVTRLSSSCTPMLPGVLEFDLPLDSKWEFPRERLVLGKPLGEGCFGQVVRAEAYGINKDQPDKAITVAIKIVKDKGTDKELSDLISEMELMKLMGKHKNIINLLGVCTQDGPLYMIVEYASKGNLREFLRARRPPSPDYTFDMTKVPEEQLSFQDLVSCSYQVARGMAYLESKRCIHRDLAARNVLVTGENVMKIADFGLARGVHDIDYYKKTSNGRLPVKWMAPEALFDRVYTHQSDVWSFGVLTWEIFTLGGSPYPGIPVEELFKLLREGHRMDKPSNCTHELYMLMRECWHAAPSQRPTFKQLVETLDRILATVAEEYLDLSMPFEQYSPACEDTTSTCSSDDSVFTHEPDVPSLFTHHTTTSMVGT</sequence>
<feature type="signal peptide" evidence="2">
    <location>
        <begin position="1"/>
        <end position="35"/>
    </location>
</feature>
<feature type="chain" id="PRO_0000249219" description="Fibroblast growth factor receptor 4">
    <location>
        <begin position="36"/>
        <end position="822"/>
    </location>
</feature>
<feature type="topological domain" description="Extracellular" evidence="2">
    <location>
        <begin position="36"/>
        <end position="388"/>
    </location>
</feature>
<feature type="transmembrane region" description="Helical" evidence="2">
    <location>
        <begin position="389"/>
        <end position="409"/>
    </location>
</feature>
<feature type="topological domain" description="Cytoplasmic" evidence="2">
    <location>
        <begin position="410"/>
        <end position="822"/>
    </location>
</feature>
<feature type="domain" description="Ig-like C2-type 1">
    <location>
        <begin position="39"/>
        <end position="129"/>
    </location>
</feature>
<feature type="domain" description="Ig-like C2-type 2">
    <location>
        <begin position="157"/>
        <end position="259"/>
    </location>
</feature>
<feature type="domain" description="Ig-like C2-type 3">
    <location>
        <begin position="268"/>
        <end position="368"/>
    </location>
</feature>
<feature type="domain" description="Protein kinase" evidence="4">
    <location>
        <begin position="486"/>
        <end position="774"/>
    </location>
</feature>
<feature type="region of interest" description="Disordered" evidence="6">
    <location>
        <begin position="136"/>
        <end position="166"/>
    </location>
</feature>
<feature type="active site" description="Proton acceptor" evidence="4 5">
    <location>
        <position position="631"/>
    </location>
</feature>
<feature type="binding site" evidence="4">
    <location>
        <begin position="492"/>
        <end position="500"/>
    </location>
    <ligand>
        <name>ATP</name>
        <dbReference type="ChEBI" id="CHEBI:30616"/>
    </ligand>
</feature>
<feature type="binding site" evidence="4">
    <location>
        <position position="522"/>
    </location>
    <ligand>
        <name>ATP</name>
        <dbReference type="ChEBI" id="CHEBI:30616"/>
    </ligand>
</feature>
<feature type="modified residue" description="Phosphotyrosine; by autocatalysis" evidence="1">
    <location>
        <position position="661"/>
    </location>
</feature>
<feature type="modified residue" description="Phosphotyrosine; by autocatalysis" evidence="1">
    <location>
        <position position="662"/>
    </location>
</feature>
<feature type="modified residue" description="Phosphotyrosine; by autocatalysis" evidence="1">
    <location>
        <position position="773"/>
    </location>
</feature>
<feature type="glycosylation site" description="N-linked (GlcNAc...) asparagine" evidence="2">
    <location>
        <position position="13"/>
    </location>
</feature>
<feature type="glycosylation site" description="N-linked (GlcNAc...) asparagine" evidence="2">
    <location>
        <position position="72"/>
    </location>
</feature>
<feature type="glycosylation site" description="N-linked (GlcNAc...) asparagine" evidence="2">
    <location>
        <position position="125"/>
    </location>
</feature>
<feature type="glycosylation site" description="N-linked (GlcNAc...) asparagine" evidence="2">
    <location>
        <position position="240"/>
    </location>
</feature>
<feature type="glycosylation site" description="N-linked (GlcNAc...) asparagine" evidence="2">
    <location>
        <position position="277"/>
    </location>
</feature>
<feature type="glycosylation site" description="N-linked (GlcNAc...) asparagine" evidence="2">
    <location>
        <position position="309"/>
    </location>
</feature>
<feature type="glycosylation site" description="N-linked (GlcNAc...) asparagine" evidence="2">
    <location>
        <position position="330"/>
    </location>
</feature>
<feature type="glycosylation site" description="N-linked (GlcNAc...) asparagine" evidence="2">
    <location>
        <position position="341"/>
    </location>
</feature>
<feature type="disulfide bond" evidence="3">
    <location>
        <begin position="69"/>
        <end position="114"/>
    </location>
</feature>
<feature type="disulfide bond" evidence="3">
    <location>
        <begin position="191"/>
        <end position="243"/>
    </location>
</feature>
<feature type="disulfide bond" evidence="3">
    <location>
        <begin position="290"/>
        <end position="352"/>
    </location>
</feature>
<name>FGFR4_PLEWA</name>
<comment type="function">
    <text evidence="1">Tyrosine-protein kinase that acts as a cell-surface receptor for fibroblast growth factors and plays a role in the regulation of cell proliferation, differentiation and migration, and in regulation of lipid metabolism, bile acid biosynthesis, glucose uptake, vitamin D metabolism and phosphate homeostasis. Required for normal down-regulation of the expression of CYP7A1, the rate-limiting enzyme in bile acid synthesis, in response to FGF19. Phosphorylates PLCG1 and FRS2. Ligand binding leads to the activation of several signaling cascades. Activation of PLCG1 leads to the production of the cellular signaling molecules diacylglycerol and inositol 1,4,5-trisphosphate. Phosphorylation of FRS2 triggers recruitment of GRB2, GAB1, PIK3R1 and SOS1, and mediates activation of RAS, MAPK1/ERK2, MAPK3/ERK1 and the MAP kinase signaling pathway, as well as of the AKT1 signaling pathway (By similarity).</text>
</comment>
<comment type="catalytic activity">
    <reaction evidence="5">
        <text>L-tyrosyl-[protein] + ATP = O-phospho-L-tyrosyl-[protein] + ADP + H(+)</text>
        <dbReference type="Rhea" id="RHEA:10596"/>
        <dbReference type="Rhea" id="RHEA-COMP:10136"/>
        <dbReference type="Rhea" id="RHEA-COMP:20101"/>
        <dbReference type="ChEBI" id="CHEBI:15378"/>
        <dbReference type="ChEBI" id="CHEBI:30616"/>
        <dbReference type="ChEBI" id="CHEBI:46858"/>
        <dbReference type="ChEBI" id="CHEBI:61978"/>
        <dbReference type="ChEBI" id="CHEBI:456216"/>
        <dbReference type="EC" id="2.7.10.1"/>
    </reaction>
</comment>
<comment type="activity regulation">
    <text evidence="1">Present in an inactive conformation in the absence of bound ligand. Ligand binding leads to dimerization and activation by autophosphorylation on tyrosine residues (By similarity).</text>
</comment>
<comment type="subcellular location">
    <subcellularLocation>
        <location evidence="1">Cell membrane</location>
        <topology evidence="1">Single-pass type I membrane protein</topology>
    </subcellularLocation>
    <subcellularLocation>
        <location evidence="1">Endosome</location>
    </subcellularLocation>
    <subcellularLocation>
        <location evidence="1">Endoplasmic reticulum</location>
    </subcellularLocation>
    <text evidence="1">Internalized from the cell membrane to recycling endosomes, and from there back to the cell membrane.</text>
</comment>
<comment type="developmental stage">
    <text evidence="7">First expressed at the late blastula stage, predominantly localized to the presumptive ectoderm. Most abundantly expressed in neural tissue with more transcripts in lateral plate mesoderm than in the somites.</text>
</comment>
<comment type="PTM">
    <text evidence="1">Ubiquitinated. Subject to proteasomal degradation when not fully glycosylated (By similarity).</text>
</comment>
<comment type="PTM">
    <text evidence="1">Autophosphorylated. Binding of FGF family members together with heparan sulfate proteoglycan or heparin promotes receptor dimerization and autophosphorylation on tyrosine residues. Autophosphorylation occurs in trans between the two FGFR molecules present in the dimer (By similarity).</text>
</comment>
<comment type="similarity">
    <text evidence="4">Belongs to the protein kinase superfamily. Tyr protein kinase family. Fibroblast growth factor receptor subfamily.</text>
</comment>
<reference key="1">
    <citation type="journal article" date="1992" name="Development">
        <title>Differential expression and regulation of two distinct fibroblast growth factor receptors during early development of the urodele amphibian Pleurodeles waltl.</title>
        <authorList>
            <person name="Shi D.-L."/>
            <person name="Feige J.-J."/>
            <person name="Riou J.-F."/>
            <person name="DeSimone D.W."/>
            <person name="Boucaut J.-C."/>
        </authorList>
    </citation>
    <scope>NUCLEOTIDE SEQUENCE [MRNA]</scope>
    <scope>DEVELOPMENTAL STAGE</scope>
</reference>
<proteinExistence type="evidence at transcript level"/>
<dbReference type="EC" id="2.7.10.1"/>
<dbReference type="EMBL" id="X65059">
    <property type="protein sequence ID" value="CAA46192.1"/>
    <property type="molecule type" value="mRNA"/>
</dbReference>
<dbReference type="PIR" id="B49151">
    <property type="entry name" value="B49151"/>
</dbReference>
<dbReference type="PIR" id="S19947">
    <property type="entry name" value="S19947"/>
</dbReference>
<dbReference type="SMR" id="Q91288"/>
<dbReference type="GlyCosmos" id="Q91288">
    <property type="glycosylation" value="8 sites, No reported glycans"/>
</dbReference>
<dbReference type="GO" id="GO:0005783">
    <property type="term" value="C:endoplasmic reticulum"/>
    <property type="evidence" value="ECO:0007669"/>
    <property type="project" value="UniProtKB-SubCell"/>
</dbReference>
<dbReference type="GO" id="GO:0005768">
    <property type="term" value="C:endosome"/>
    <property type="evidence" value="ECO:0007669"/>
    <property type="project" value="UniProtKB-SubCell"/>
</dbReference>
<dbReference type="GO" id="GO:0005886">
    <property type="term" value="C:plasma membrane"/>
    <property type="evidence" value="ECO:0007669"/>
    <property type="project" value="UniProtKB-SubCell"/>
</dbReference>
<dbReference type="GO" id="GO:0043235">
    <property type="term" value="C:receptor complex"/>
    <property type="evidence" value="ECO:0007669"/>
    <property type="project" value="TreeGrafter"/>
</dbReference>
<dbReference type="GO" id="GO:0005524">
    <property type="term" value="F:ATP binding"/>
    <property type="evidence" value="ECO:0007669"/>
    <property type="project" value="UniProtKB-KW"/>
</dbReference>
<dbReference type="GO" id="GO:0017134">
    <property type="term" value="F:fibroblast growth factor binding"/>
    <property type="evidence" value="ECO:0007669"/>
    <property type="project" value="TreeGrafter"/>
</dbReference>
<dbReference type="GO" id="GO:0005007">
    <property type="term" value="F:fibroblast growth factor receptor activity"/>
    <property type="evidence" value="ECO:0007669"/>
    <property type="project" value="InterPro"/>
</dbReference>
<dbReference type="GO" id="GO:0008284">
    <property type="term" value="P:positive regulation of cell population proliferation"/>
    <property type="evidence" value="ECO:0007669"/>
    <property type="project" value="InterPro"/>
</dbReference>
<dbReference type="GO" id="GO:0070374">
    <property type="term" value="P:positive regulation of ERK1 and ERK2 cascade"/>
    <property type="evidence" value="ECO:0007669"/>
    <property type="project" value="TreeGrafter"/>
</dbReference>
<dbReference type="GO" id="GO:0070857">
    <property type="term" value="P:regulation of bile acid biosynthetic process"/>
    <property type="evidence" value="ECO:0007669"/>
    <property type="project" value="TreeGrafter"/>
</dbReference>
<dbReference type="CDD" id="cd05857">
    <property type="entry name" value="IgI_2_FGFR"/>
    <property type="match status" value="1"/>
</dbReference>
<dbReference type="FunFam" id="1.10.510.10:FF:000007">
    <property type="entry name" value="Fibroblast growth factor receptor"/>
    <property type="match status" value="1"/>
</dbReference>
<dbReference type="FunFam" id="2.60.40.10:FF:000016">
    <property type="entry name" value="Fibroblast growth factor receptor"/>
    <property type="match status" value="1"/>
</dbReference>
<dbReference type="FunFam" id="2.60.40.10:FF:000020">
    <property type="entry name" value="Fibroblast growth factor receptor"/>
    <property type="match status" value="1"/>
</dbReference>
<dbReference type="FunFam" id="3.30.200.20:FF:000011">
    <property type="entry name" value="Fibroblast growth factor receptor"/>
    <property type="match status" value="1"/>
</dbReference>
<dbReference type="Gene3D" id="2.60.40.10">
    <property type="entry name" value="Immunoglobulins"/>
    <property type="match status" value="3"/>
</dbReference>
<dbReference type="Gene3D" id="3.30.200.20">
    <property type="entry name" value="Phosphorylase Kinase, domain 1"/>
    <property type="match status" value="1"/>
</dbReference>
<dbReference type="Gene3D" id="1.10.510.10">
    <property type="entry name" value="Transferase(Phosphotransferase) domain 1"/>
    <property type="match status" value="1"/>
</dbReference>
<dbReference type="InterPro" id="IPR016248">
    <property type="entry name" value="FGF_rcpt_fam"/>
</dbReference>
<dbReference type="InterPro" id="IPR007110">
    <property type="entry name" value="Ig-like_dom"/>
</dbReference>
<dbReference type="InterPro" id="IPR036179">
    <property type="entry name" value="Ig-like_dom_sf"/>
</dbReference>
<dbReference type="InterPro" id="IPR013783">
    <property type="entry name" value="Ig-like_fold"/>
</dbReference>
<dbReference type="InterPro" id="IPR013098">
    <property type="entry name" value="Ig_I-set"/>
</dbReference>
<dbReference type="InterPro" id="IPR003599">
    <property type="entry name" value="Ig_sub"/>
</dbReference>
<dbReference type="InterPro" id="IPR003598">
    <property type="entry name" value="Ig_sub2"/>
</dbReference>
<dbReference type="InterPro" id="IPR011009">
    <property type="entry name" value="Kinase-like_dom_sf"/>
</dbReference>
<dbReference type="InterPro" id="IPR000719">
    <property type="entry name" value="Prot_kinase_dom"/>
</dbReference>
<dbReference type="InterPro" id="IPR017441">
    <property type="entry name" value="Protein_kinase_ATP_BS"/>
</dbReference>
<dbReference type="InterPro" id="IPR050122">
    <property type="entry name" value="RTK"/>
</dbReference>
<dbReference type="InterPro" id="IPR001245">
    <property type="entry name" value="Ser-Thr/Tyr_kinase_cat_dom"/>
</dbReference>
<dbReference type="InterPro" id="IPR008266">
    <property type="entry name" value="Tyr_kinase_AS"/>
</dbReference>
<dbReference type="InterPro" id="IPR020635">
    <property type="entry name" value="Tyr_kinase_cat_dom"/>
</dbReference>
<dbReference type="PANTHER" id="PTHR24416:SF343">
    <property type="entry name" value="FIBROBLAST GROWTH FACTOR RECEPTOR 4"/>
    <property type="match status" value="1"/>
</dbReference>
<dbReference type="PANTHER" id="PTHR24416">
    <property type="entry name" value="TYROSINE-PROTEIN KINASE RECEPTOR"/>
    <property type="match status" value="1"/>
</dbReference>
<dbReference type="Pfam" id="PF07679">
    <property type="entry name" value="I-set"/>
    <property type="match status" value="1"/>
</dbReference>
<dbReference type="Pfam" id="PF13927">
    <property type="entry name" value="Ig_3"/>
    <property type="match status" value="1"/>
</dbReference>
<dbReference type="Pfam" id="PF07714">
    <property type="entry name" value="PK_Tyr_Ser-Thr"/>
    <property type="match status" value="1"/>
</dbReference>
<dbReference type="PIRSF" id="PIRSF000628">
    <property type="entry name" value="FGFR"/>
    <property type="match status" value="1"/>
</dbReference>
<dbReference type="PRINTS" id="PR00109">
    <property type="entry name" value="TYRKINASE"/>
</dbReference>
<dbReference type="SMART" id="SM00409">
    <property type="entry name" value="IG"/>
    <property type="match status" value="3"/>
</dbReference>
<dbReference type="SMART" id="SM00408">
    <property type="entry name" value="IGc2"/>
    <property type="match status" value="3"/>
</dbReference>
<dbReference type="SMART" id="SM00219">
    <property type="entry name" value="TyrKc"/>
    <property type="match status" value="1"/>
</dbReference>
<dbReference type="SUPFAM" id="SSF48726">
    <property type="entry name" value="Immunoglobulin"/>
    <property type="match status" value="3"/>
</dbReference>
<dbReference type="SUPFAM" id="SSF56112">
    <property type="entry name" value="Protein kinase-like (PK-like)"/>
    <property type="match status" value="1"/>
</dbReference>
<dbReference type="PROSITE" id="PS50835">
    <property type="entry name" value="IG_LIKE"/>
    <property type="match status" value="3"/>
</dbReference>
<dbReference type="PROSITE" id="PS00107">
    <property type="entry name" value="PROTEIN_KINASE_ATP"/>
    <property type="match status" value="1"/>
</dbReference>
<dbReference type="PROSITE" id="PS50011">
    <property type="entry name" value="PROTEIN_KINASE_DOM"/>
    <property type="match status" value="1"/>
</dbReference>
<dbReference type="PROSITE" id="PS00109">
    <property type="entry name" value="PROTEIN_KINASE_TYR"/>
    <property type="match status" value="1"/>
</dbReference>
<accession>Q91288</accession>